<reference key="1">
    <citation type="journal article" date="1998" name="Science">
        <title>Genome sequence of the nematode C. elegans: a platform for investigating biology.</title>
        <authorList>
            <consortium name="The C. elegans sequencing consortium"/>
        </authorList>
    </citation>
    <scope>NUCLEOTIDE SEQUENCE [LARGE SCALE GENOMIC DNA]</scope>
    <source>
        <strain>Bristol N2</strain>
    </source>
</reference>
<reference key="2">
    <citation type="journal article" date="2010" name="Cell">
        <title>C. elegans screen identifies autophagy genes specific to multicellular organisms.</title>
        <authorList>
            <person name="Tian Y."/>
            <person name="Li Z."/>
            <person name="Hu W."/>
            <person name="Ren H."/>
            <person name="Tian E."/>
            <person name="Zhao Y."/>
            <person name="Lu Q."/>
            <person name="Huang X."/>
            <person name="Yang P."/>
            <person name="Li X."/>
            <person name="Wang X."/>
            <person name="Kovacs A.L."/>
            <person name="Yu L."/>
            <person name="Zhang H."/>
        </authorList>
    </citation>
    <scope>FUNCTION</scope>
    <scope>SUBCELLULAR LOCATION</scope>
    <scope>TISSUE SPECIFICITY</scope>
    <scope>DEVELOPMENTAL STAGE</scope>
    <scope>DISRUPTION PHENOTYPE</scope>
</reference>
<reference key="3">
    <citation type="journal article" date="2012" name="J. Cell Biol.">
        <title>Autophagy genes function sequentially to promote apoptotic cell corpse degradation in the engulfing cell.</title>
        <authorList>
            <person name="Li W."/>
            <person name="Zou W."/>
            <person name="Yang Y."/>
            <person name="Chai Y."/>
            <person name="Chen B."/>
            <person name="Cheng S."/>
            <person name="Tian D."/>
            <person name="Wang X."/>
            <person name="Vale R.D."/>
            <person name="Ou G."/>
        </authorList>
    </citation>
    <scope>FUNCTION</scope>
    <scope>SUBCELLULAR LOCATION</scope>
</reference>
<reference key="4">
    <citation type="journal article" date="2014" name="Dev. Cell">
        <title>The C. elegans LC3 acts downstream of GABARAP to degrade autophagosomes by interacting with the HOPS subunit VPS39.</title>
        <authorList>
            <person name="Manil-Segalen M."/>
            <person name="Lefebvre C."/>
            <person name="Jenzer C."/>
            <person name="Trichet M."/>
            <person name="Boulogne C."/>
            <person name="Satiat-Jeunemaitre B."/>
            <person name="Legouis R."/>
        </authorList>
    </citation>
    <scope>FUNCTION</scope>
    <scope>DISRUPTION PHENOTYPE</scope>
</reference>
<reference key="5">
    <citation type="journal article" date="2014" name="EMBO Rep.">
        <title>PI3P phosphatase activity is required for autophagosome maturation and autolysosome formation.</title>
        <authorList>
            <person name="Wu Y."/>
            <person name="Cheng S."/>
            <person name="Zhao H."/>
            <person name="Zou W."/>
            <person name="Yoshina S."/>
            <person name="Mitani S."/>
            <person name="Zhang H."/>
            <person name="Wang X."/>
        </authorList>
    </citation>
    <scope>FUNCTION</scope>
</reference>
<dbReference type="EMBL" id="BX284602">
    <property type="protein sequence ID" value="CCD68183.2"/>
    <property type="molecule type" value="Genomic_DNA"/>
</dbReference>
<dbReference type="PIR" id="T15854">
    <property type="entry name" value="T15854"/>
</dbReference>
<dbReference type="PDB" id="8TGF">
    <property type="method" value="X-ray"/>
    <property type="resolution" value="1.60 A"/>
    <property type="chains" value="B=505-515"/>
</dbReference>
<dbReference type="PDBsum" id="8TGF"/>
<dbReference type="SMR" id="Q18892"/>
<dbReference type="BioGRID" id="533112">
    <property type="interactions" value="5"/>
</dbReference>
<dbReference type="FunCoup" id="Q18892">
    <property type="interactions" value="2931"/>
</dbReference>
<dbReference type="STRING" id="6239.C56C10.12.1"/>
<dbReference type="iPTMnet" id="Q18892"/>
<dbReference type="PaxDb" id="6239-C56C10.12"/>
<dbReference type="PeptideAtlas" id="Q18892"/>
<dbReference type="EnsemblMetazoa" id="C56C10.12.1">
    <property type="protein sequence ID" value="C56C10.12.1"/>
    <property type="gene ID" value="WBGene00016968"/>
</dbReference>
<dbReference type="UCSC" id="C56C10.12">
    <property type="organism name" value="c. elegans"/>
</dbReference>
<dbReference type="AGR" id="WB:WBGene00016968"/>
<dbReference type="WormBase" id="C56C10.12">
    <property type="protein sequence ID" value="CE52956"/>
    <property type="gene ID" value="WBGene00016968"/>
    <property type="gene designation" value="epg-5"/>
</dbReference>
<dbReference type="eggNOG" id="KOG3622">
    <property type="taxonomic scope" value="Eukaryota"/>
</dbReference>
<dbReference type="GeneTree" id="ENSGT00940000167151"/>
<dbReference type="HOGENOM" id="CLU_003383_0_0_1"/>
<dbReference type="InParanoid" id="Q18892"/>
<dbReference type="PhylomeDB" id="Q18892"/>
<dbReference type="PRO" id="PR:Q18892"/>
<dbReference type="Proteomes" id="UP000001940">
    <property type="component" value="Chromosome II"/>
</dbReference>
<dbReference type="Bgee" id="WBGene00016968">
    <property type="expression patterns" value="Expressed in pharyngeal muscle cell (C elegans) and 3 other cell types or tissues"/>
</dbReference>
<dbReference type="GO" id="GO:0005737">
    <property type="term" value="C:cytoplasm"/>
    <property type="evidence" value="ECO:0000314"/>
    <property type="project" value="WormBase"/>
</dbReference>
<dbReference type="GO" id="GO:0030670">
    <property type="term" value="C:phagocytic vesicle membrane"/>
    <property type="evidence" value="ECO:0007669"/>
    <property type="project" value="UniProtKB-SubCell"/>
</dbReference>
<dbReference type="GO" id="GO:0097352">
    <property type="term" value="P:autophagosome maturation"/>
    <property type="evidence" value="ECO:0000318"/>
    <property type="project" value="GO_Central"/>
</dbReference>
<dbReference type="GO" id="GO:0016236">
    <property type="term" value="P:macroautophagy"/>
    <property type="evidence" value="ECO:0000315"/>
    <property type="project" value="WormBase"/>
</dbReference>
<dbReference type="GO" id="GO:1902902">
    <property type="term" value="P:negative regulation of autophagosome assembly"/>
    <property type="evidence" value="ECO:0000315"/>
    <property type="project" value="UniProtKB"/>
</dbReference>
<dbReference type="InterPro" id="IPR051436">
    <property type="entry name" value="Autophagy-related_EPG5"/>
</dbReference>
<dbReference type="PANTHER" id="PTHR31139">
    <property type="entry name" value="ECTOPIC P GRANULES PROTEIN 5 HOMOLOG"/>
    <property type="match status" value="1"/>
</dbReference>
<dbReference type="PANTHER" id="PTHR31139:SF4">
    <property type="entry name" value="ECTOPIC P GRANULES PROTEIN 5 HOMOLOG"/>
    <property type="match status" value="1"/>
</dbReference>
<proteinExistence type="evidence at protein level"/>
<gene>
    <name evidence="8" type="primary">epg-5</name>
    <name evidence="8" type="ORF">C56C10.12</name>
</gene>
<keyword id="KW-0002">3D-structure</keyword>
<keyword id="KW-0072">Autophagy</keyword>
<keyword id="KW-0963">Cytoplasm</keyword>
<keyword id="KW-0968">Cytoplasmic vesicle</keyword>
<keyword id="KW-0472">Membrane</keyword>
<keyword id="KW-1185">Reference proteome</keyword>
<name>EPG5_CAEEL</name>
<comment type="function">
    <text evidence="2 3 4 5">Involved in the maturation of autophagosomes into autolysosomes during starvation-induced autotrophy (PubMed:20550938, PubMed:22451698, PubMed:24374177, PubMed:25124690). Specifically, involved in the clearance of apoptotic cells by promoting the delivery of engulfed apoptotic cells to the lysosome (PubMed:22451698).</text>
</comment>
<comment type="subcellular location">
    <subcellularLocation>
        <location evidence="2">Cytoplasm</location>
    </subcellularLocation>
    <subcellularLocation>
        <location evidence="3">Cytoplasmic vesicle</location>
        <location evidence="3">Phagosome membrane</location>
        <topology evidence="7">Peripheral membrane protein</topology>
        <orientation evidence="7">Cytoplasmic side</orientation>
    </subcellularLocation>
    <text evidence="3">Partially localizes to the phagosome membrane of engulfed apoptotic cells.</text>
</comment>
<comment type="tissue specificity">
    <text evidence="2">Expressed in pharyngeal and body wall muscles and intestine cells.</text>
</comment>
<comment type="developmental stage">
    <text evidence="2">Ubiquitously expressed during embryogenesis.</text>
</comment>
<comment type="disruption phenotype">
    <text evidence="2 4">Increased number and reduced size of P granules (pgl-3-positive and lgg-1-positive) and sqst-1-positive protein aggregates in embryos (PubMed:20550938). RNAi-mediated knockdown results in increased lgg-2-positive autophagosomes following fertilization and at later embryonic stages (PubMed:24374177).</text>
</comment>
<comment type="similarity">
    <text evidence="6">Belongs to the EPG5 family.</text>
</comment>
<evidence type="ECO:0000256" key="1">
    <source>
        <dbReference type="SAM" id="MobiDB-lite"/>
    </source>
</evidence>
<evidence type="ECO:0000269" key="2">
    <source>
    </source>
</evidence>
<evidence type="ECO:0000269" key="3">
    <source>
    </source>
</evidence>
<evidence type="ECO:0000269" key="4">
    <source>
    </source>
</evidence>
<evidence type="ECO:0000269" key="5">
    <source>
    </source>
</evidence>
<evidence type="ECO:0000305" key="6"/>
<evidence type="ECO:0000305" key="7">
    <source>
    </source>
</evidence>
<evidence type="ECO:0000312" key="8">
    <source>
        <dbReference type="WormBase" id="C56C10.12"/>
    </source>
</evidence>
<sequence>MAELVRPKKPKHRERAQSDYTPPIPDRPAIVNGLRLPAAPSHTIEDLPERSASPEPEDQDISLTEDSLKREEASEPLKDVRSSPVRPAPPPPRVSQEREAPPIPPRSMIFPRSTSMVAESRKESTTAVAPKRSVAVASYPAVPELAELPSYTDALQHPQVYPSINGGLQHSHSATAIPEKTRFSAPVERERVREGEAPPMYPSIKTYERNEHGLMTEENLVTFYHNPLYEHAEMFVDQFIKTEEVPTQSGSLFPLLARLRTVCDLMTVSEVKGKENTEELQKCLRECWVQQSLSVDAKGKCGDNNDGTGRASYFSFELQQAVLDQMKKLLSTNRSNLMDHSVCEETSFRSIALQIQWQVIIINNNFMAENGLSTNCPPSLIASVPMTPGRVALRTALSDIFYHLRYPRLSKRFIDTLVGWIKELTCVLNMRQSCDDGIFLLCHLLRLPSPIDQWASPFVQTFIQSQSAPKLKLDYCVALLTHLLNPIKARESFLRHVAQSEKEESTWEILADDDDGEANEFSFVTINESDLTAFLDQFPISELYSIAYLAFTSYSDKGSQFTAMIAFQLLLMKILDNGLTSYSQPGYKMFCKQIGISLKHSVRELCSNWRLIRDQVRPGEEHHLQKEVDRVVLLALNYLIHQDTLGLFQFVVSLPYAVVSEECRSRCEYALRSNKKMSIHEIYDTPICEVRARISSQGISKRIGALGAQDSEFLVNSLASIGSYSNSDVSQLLKELIDVCFCDEDTRDDLYKCGGEAIGQILIKRPETLHQLLTIIDRNLQHMDSYAINVLSSSRLFECRLTEPMISIIGKWLINNPPEHGANRLARRVLSGLHWGLAVDGHNLWIDVDVHTIAADTVVKAHSVHCSRSNSMISKSINKISKLASKVGDAESLFQQFCWDLLVKLKLPTIPSSLVQNDLTAHYVRIVQNCEDDVVVYLEKGVPLLSDLVTSGSSVASVVLLSRLIAQHYQNVNLMAADKNFMTTFERLLHIDQLPYAVQWLSGPSSTPTPIVKLICSAISYYSAKLPPRDYLRAWITLLCAARTGWNEDAVTYQIVGTIARIAFVNDTHKLYEITGIIFQAYQQQLAAEKNQSKGIMSMFSSDNTVSPLIPDSMLSISPFASYVMLRVEQKSFNTFYGHFFETLTKKDKYTLDNAVKKASSKCSITVPVERLAIFRWAKLVTVCNDHQLLPILLQQLSGSAYRLRKANNLNLCYARRLIDDPQMQDVMAACRKAIEESTIETKGLSKAVVGWLFTKHEVTRTGFDFSVFDLDYLLQLILAGDKNMWLDFVNMPYFNSEEFSERKLYSVTCQLSPKNRESPLPPEIGSPRSRSSAKPFPVLPVHSGLPQAPLIDPSILFQQHTVLQLASPFINTIKQLSKQFAQSGDRMSMDDDSYCKQIKALYQPTQQTIPVEIRCSYCSKPKACTMSIKPNVLNSEIDLQMTQNRTKRFEFWNELYASIVDKAAVATASIEHLSVLVAKMTSALHPGTRNNVQLTGHSLFYLITSSVGENELLFSVASDSFCNSLRSLGEEYVKFRPEEQMDVMQLALDGFVLSEPLVEVFTPEVLNSDDLCTAYRKLSDAVRMPERSKMALQLLGRLGMQQAAAGLPPHQFAALLPIAFANLASQPDPSSPLHALCLQHVIFFVFHHFPDNIVNGLDLTLDGCNTNSTPASLLDAIVDKLDANDYLKKKNSFDLGAAKADECARILSKRLDEARTKLPNFYGIWSRYLDSVTRLAQLFLFVPIRDGYEPNKSVSVLQRECYEYFTRVAAVFSPLIAPYSPTHPPFSTSHEAQAMLVLDRFVDFLSALHFNSSIPPGMQNIQSLVWQYYCEKLSILTHGTQHYYDVIERQLVRLNWQALWPSRLAITAMENCLDTRSQDCASFISQMVARIPWSNILQTMHEDSRPSYLASLFGVLVRLAARPRNYDKVRASLLELCKSFSLRSDWNKIYPEDAAGIASAVTKCLPSDSLSNPVEMVSVIQVIWRKICCFVVREPFSEVSLQKQKLWIQTESSLLLKAESSQIPAAYNSLISDVNALALNHSNLREFRVVTRELTAMWKNITDAKLGEALVSIWSEYLAANPTSPLVLTSVNTLVDSLNIDQLTTALKVIEKVICAYFLRTDSNWAELLHWIQFPTGSLKSIKSYLMTVPSSENKVQMLPLTLKIFMDYGGVDENKFFDLHHYVISIRPKHVASESGFICLLARHLQWMANRSSALPAHFAPSDDLLSSLIKYLGKASKDESSFLTALISSKKTAYSQKMRVTLHILELYLTQQTLGEGKRPRCDANSPVLNSRISTLKDLAQQKSNQNMSNAFNKATAYFVQIETHRIQSSPKLLLEIGRSAFGDLFLTD</sequence>
<organism>
    <name type="scientific">Caenorhabditis elegans</name>
    <dbReference type="NCBI Taxonomy" id="6239"/>
    <lineage>
        <taxon>Eukaryota</taxon>
        <taxon>Metazoa</taxon>
        <taxon>Ecdysozoa</taxon>
        <taxon>Nematoda</taxon>
        <taxon>Chromadorea</taxon>
        <taxon>Rhabditida</taxon>
        <taxon>Rhabditina</taxon>
        <taxon>Rhabditomorpha</taxon>
        <taxon>Rhabditoidea</taxon>
        <taxon>Rhabditidae</taxon>
        <taxon>Peloderinae</taxon>
        <taxon>Caenorhabditis</taxon>
    </lineage>
</organism>
<feature type="chain" id="PRO_0000306261" description="Ectopic P granules protein 5">
    <location>
        <begin position="1"/>
        <end position="2352"/>
    </location>
</feature>
<feature type="region of interest" description="Disordered" evidence="1">
    <location>
        <begin position="1"/>
        <end position="112"/>
    </location>
</feature>
<feature type="region of interest" description="Disordered" evidence="1">
    <location>
        <begin position="1315"/>
        <end position="1335"/>
    </location>
</feature>
<feature type="compositionally biased region" description="Basic and acidic residues" evidence="1">
    <location>
        <begin position="66"/>
        <end position="81"/>
    </location>
</feature>
<accession>Q18892</accession>
<protein>
    <recommendedName>
        <fullName>Ectopic P granules protein 5</fullName>
    </recommendedName>
</protein>